<protein>
    <recommendedName>
        <fullName evidence="1">Septation ring formation regulator EzrA</fullName>
    </recommendedName>
</protein>
<accession>Q2FXK8</accession>
<proteinExistence type="inferred from homology"/>
<name>EZRA_STAA8</name>
<keyword id="KW-0131">Cell cycle</keyword>
<keyword id="KW-0132">Cell division</keyword>
<keyword id="KW-1003">Cell membrane</keyword>
<keyword id="KW-0175">Coiled coil</keyword>
<keyword id="KW-0472">Membrane</keyword>
<keyword id="KW-1185">Reference proteome</keyword>
<keyword id="KW-0717">Septation</keyword>
<keyword id="KW-0812">Transmembrane</keyword>
<keyword id="KW-1133">Transmembrane helix</keyword>
<evidence type="ECO:0000255" key="1">
    <source>
        <dbReference type="HAMAP-Rule" id="MF_00728"/>
    </source>
</evidence>
<organism>
    <name type="scientific">Staphylococcus aureus (strain NCTC 8325 / PS 47)</name>
    <dbReference type="NCBI Taxonomy" id="93061"/>
    <lineage>
        <taxon>Bacteria</taxon>
        <taxon>Bacillati</taxon>
        <taxon>Bacillota</taxon>
        <taxon>Bacilli</taxon>
        <taxon>Bacillales</taxon>
        <taxon>Staphylococcaceae</taxon>
        <taxon>Staphylococcus</taxon>
    </lineage>
</organism>
<sequence>MVLYIILAIIVIILIAVGVLFYLRSNKRQIIEKAIERKNEIETLPFDQNLAQLFKLNLKGETKTKYDAMKKDTVESTNKYLAPVEEKIHNAEALLDKFSFNASQSEIDDANELMDSYEQSYQQQLEDVNEIIALYKDNDELYDKCKVDYREMKRDVLANRHQFGEAASLLETEIEKFEPRLEQYEVLKADGNYVQAHNHIAALNEQMKQLRSYMEEIPELIRETQKELPGQFQDLKYGCRDLKVEGYDLDHVKVDSTLQSLKTELSFVEPLISRLELEEANDKLANINDKLDDMYDLIEHEVKAKNDVEETKDIITDNLFKAKDMNYTLQTEIEYVRENYYINESDAQSVRQFENEIQSLISVYDDILKEMSKSAVRYSEVQDNLQYLEDHVTVINDKQEKLQNHLIQLREDEAEAEDNLLRVQSKKEEVYRRLLASNLTSVPERFIIMKNEIDHEVRDVNEQFSERPIHVKQLKDKVSKIVIQMNTFEDEANDVLVNAVYAEKLIQYGNRYRKDYSNVDKSLNEAERLFKNNRYKRAIEIAEQALESVEPGVTKHIEEEVIKQ</sequence>
<reference key="1">
    <citation type="book" date="2006" name="Gram positive pathogens, 2nd edition">
        <title>The Staphylococcus aureus NCTC 8325 genome.</title>
        <editorList>
            <person name="Fischetti V."/>
            <person name="Novick R."/>
            <person name="Ferretti J."/>
            <person name="Portnoy D."/>
            <person name="Rood J."/>
        </editorList>
        <authorList>
            <person name="Gillaspy A.F."/>
            <person name="Worrell V."/>
            <person name="Orvis J."/>
            <person name="Roe B.A."/>
            <person name="Dyer D.W."/>
            <person name="Iandolo J.J."/>
        </authorList>
    </citation>
    <scope>NUCLEOTIDE SEQUENCE [LARGE SCALE GENOMIC DNA]</scope>
    <source>
        <strain>NCTC 8325 / PS 47</strain>
    </source>
</reference>
<dbReference type="EMBL" id="CP000253">
    <property type="protein sequence ID" value="ABD30895.1"/>
    <property type="molecule type" value="Genomic_DNA"/>
</dbReference>
<dbReference type="RefSeq" id="WP_000244857.1">
    <property type="nucleotide sequence ID" value="NC_007795.1"/>
</dbReference>
<dbReference type="RefSeq" id="YP_500332.1">
    <property type="nucleotide sequence ID" value="NC_007795.1"/>
</dbReference>
<dbReference type="SMR" id="Q2FXK8"/>
<dbReference type="STRING" id="93061.SAOUHSC_01827"/>
<dbReference type="PaxDb" id="1280-SAXN108_1746"/>
<dbReference type="GeneID" id="3921777"/>
<dbReference type="KEGG" id="sao:SAOUHSC_01827"/>
<dbReference type="PATRIC" id="fig|93061.5.peg.1666"/>
<dbReference type="eggNOG" id="COG4477">
    <property type="taxonomic scope" value="Bacteria"/>
</dbReference>
<dbReference type="HOGENOM" id="CLU_034079_1_0_9"/>
<dbReference type="OrthoDB" id="1654473at2"/>
<dbReference type="Proteomes" id="UP000008816">
    <property type="component" value="Chromosome"/>
</dbReference>
<dbReference type="GO" id="GO:0005886">
    <property type="term" value="C:plasma membrane"/>
    <property type="evidence" value="ECO:0007669"/>
    <property type="project" value="UniProtKB-SubCell"/>
</dbReference>
<dbReference type="GO" id="GO:0005940">
    <property type="term" value="C:septin ring"/>
    <property type="evidence" value="ECO:0007669"/>
    <property type="project" value="InterPro"/>
</dbReference>
<dbReference type="GO" id="GO:0000917">
    <property type="term" value="P:division septum assembly"/>
    <property type="evidence" value="ECO:0007669"/>
    <property type="project" value="UniProtKB-KW"/>
</dbReference>
<dbReference type="GO" id="GO:0000921">
    <property type="term" value="P:septin ring assembly"/>
    <property type="evidence" value="ECO:0007669"/>
    <property type="project" value="InterPro"/>
</dbReference>
<dbReference type="HAMAP" id="MF_00728">
    <property type="entry name" value="EzrA"/>
    <property type="match status" value="1"/>
</dbReference>
<dbReference type="InterPro" id="IPR010379">
    <property type="entry name" value="EzrA"/>
</dbReference>
<dbReference type="NCBIfam" id="NF003412">
    <property type="entry name" value="PRK04778.1-6"/>
    <property type="match status" value="1"/>
</dbReference>
<dbReference type="Pfam" id="PF06160">
    <property type="entry name" value="EzrA"/>
    <property type="match status" value="1"/>
</dbReference>
<gene>
    <name evidence="1" type="primary">ezrA</name>
    <name type="ordered locus">SAOUHSC_01827</name>
</gene>
<comment type="function">
    <text evidence="1">Negative regulator of FtsZ ring formation; modulates the frequency and position of FtsZ ring formation. Inhibits FtsZ ring formation at polar sites. Interacts either with FtsZ or with one of its binding partners to promote depolymerization.</text>
</comment>
<comment type="subcellular location">
    <subcellularLocation>
        <location evidence="1">Cell membrane</location>
        <topology evidence="1">Single-pass membrane protein</topology>
    </subcellularLocation>
    <text evidence="1">Colocalized with FtsZ to the nascent septal site.</text>
</comment>
<comment type="similarity">
    <text evidence="1">Belongs to the EzrA family.</text>
</comment>
<feature type="chain" id="PRO_1000045903" description="Septation ring formation regulator EzrA">
    <location>
        <begin position="1"/>
        <end position="564"/>
    </location>
</feature>
<feature type="topological domain" description="Extracellular" evidence="1">
    <location>
        <begin position="1"/>
        <end position="4"/>
    </location>
</feature>
<feature type="transmembrane region" description="Helical" evidence="1">
    <location>
        <begin position="5"/>
        <end position="23"/>
    </location>
</feature>
<feature type="topological domain" description="Cytoplasmic" evidence="1">
    <location>
        <begin position="24"/>
        <end position="564"/>
    </location>
</feature>
<feature type="coiled-coil region" evidence="1">
    <location>
        <begin position="99"/>
        <end position="138"/>
    </location>
</feature>
<feature type="coiled-coil region" evidence="1">
    <location>
        <begin position="190"/>
        <end position="223"/>
    </location>
</feature>
<feature type="coiled-coil region" evidence="1">
    <location>
        <begin position="271"/>
        <end position="300"/>
    </location>
</feature>
<feature type="coiled-coil region" evidence="1">
    <location>
        <begin position="350"/>
        <end position="435"/>
    </location>
</feature>
<feature type="coiled-coil region" evidence="1">
    <location>
        <begin position="471"/>
        <end position="550"/>
    </location>
</feature>